<dbReference type="EMBL" id="AF033338">
    <property type="protein sequence ID" value="AAC36054.1"/>
    <property type="molecule type" value="mRNA"/>
</dbReference>
<dbReference type="SMR" id="P80392"/>
<dbReference type="FunCoup" id="P80392">
    <property type="interactions" value="39"/>
</dbReference>
<dbReference type="InParanoid" id="P80392"/>
<dbReference type="OrthoDB" id="9183727at2759"/>
<dbReference type="Proteomes" id="UP000001645">
    <property type="component" value="Unplaced"/>
</dbReference>
<dbReference type="GO" id="GO:0005576">
    <property type="term" value="C:extracellular region"/>
    <property type="evidence" value="ECO:0007669"/>
    <property type="project" value="UniProtKB-SubCell"/>
</dbReference>
<dbReference type="GO" id="GO:0042742">
    <property type="term" value="P:defense response to bacterium"/>
    <property type="evidence" value="ECO:0007669"/>
    <property type="project" value="UniProtKB-KW"/>
</dbReference>
<dbReference type="InterPro" id="IPR001855">
    <property type="entry name" value="Defensin_beta-like"/>
</dbReference>
<dbReference type="Pfam" id="PF00711">
    <property type="entry name" value="Defensin_beta"/>
    <property type="match status" value="1"/>
</dbReference>
<dbReference type="SUPFAM" id="SSF57392">
    <property type="entry name" value="Defensin-like"/>
    <property type="match status" value="1"/>
</dbReference>
<protein>
    <recommendedName>
        <fullName>Antimicrobial peptide THP2</fullName>
    </recommendedName>
    <alternativeName>
        <fullName>Turkey heterophil peptide 2</fullName>
    </alternativeName>
</protein>
<sequence length="64" mass="7327">MRILYLLFSLLFLALQVSPGLSSPKRDMLFCKRGTCHFGRCPSHLIKVGSCFGFRSCCKWPWDA</sequence>
<proteinExistence type="evidence at protein level"/>
<name>AMP2_MELGA</name>
<feature type="signal peptide" evidence="3">
    <location>
        <begin position="1"/>
        <end position="28"/>
    </location>
</feature>
<feature type="peptide" id="PRO_0000007018" description="Antimicrobial peptide THP2">
    <location>
        <begin position="29"/>
        <end position="64"/>
    </location>
</feature>
<feature type="disulfide bond" evidence="1">
    <location>
        <begin position="31"/>
        <end position="57"/>
    </location>
</feature>
<feature type="disulfide bond" evidence="1">
    <location>
        <begin position="36"/>
        <end position="51"/>
    </location>
</feature>
<feature type="disulfide bond" evidence="1">
    <location>
        <begin position="41"/>
        <end position="58"/>
    </location>
</feature>
<reference key="1">
    <citation type="journal article" date="1998" name="Anim. Genet.">
        <title>Characterization of beta-defensin prepropeptide mRNA from chicken and turkey bone marrow.</title>
        <authorList>
            <person name="Brockus C.W."/>
            <person name="Harmon B.G."/>
            <person name="Jackwood M.W."/>
        </authorList>
    </citation>
    <scope>NUCLEOTIDE SEQUENCE [MRNA]</scope>
    <source>
        <tissue>Bone marrow</tissue>
    </source>
</reference>
<reference key="2">
    <citation type="journal article" date="1994" name="J. Leukoc. Biol.">
        <title>Isolation of antimicrobial peptides from avian heterophils.</title>
        <authorList>
            <person name="Evans E.W."/>
            <person name="Beach G.G."/>
            <person name="Wunderlich J."/>
            <person name="Harmon B.G."/>
        </authorList>
    </citation>
    <scope>PROTEIN SEQUENCE OF 29-48</scope>
    <scope>FUNCTION</scope>
    <source>
        <tissue>Granulocyte</tissue>
    </source>
</reference>
<reference key="3">
    <citation type="journal article" date="2009" name="Poult. Sci.">
        <title>Direct screening identifies mature beta-defensin 2 in avian heterophils.</title>
        <authorList>
            <person name="Kannan L."/>
            <person name="Rath N.C."/>
            <person name="Liyanage R."/>
            <person name="Lay J.O. Jr."/>
        </authorList>
    </citation>
    <scope>IDENTIFICATION BY MASS SPECTROMETRY</scope>
    <scope>TISSUE SPECIFICITY</scope>
    <source>
        <tissue>Bone marrow</tissue>
        <tissue>Granulocyte</tissue>
    </source>
</reference>
<comment type="function">
    <text evidence="3">Antibacterial activity against the Gram-positive bacterium Staphylococcus aureus. Lacks antibacterial activity against the Gram-negative bacterium E.coli K-12.</text>
</comment>
<comment type="subcellular location">
    <subcellularLocation>
        <location>Secreted</location>
    </subcellularLocation>
</comment>
<comment type="tissue specificity">
    <text evidence="2">Expressed in circulating heterophil granulocytes and bone marrow (at protein level).</text>
</comment>
<comment type="mass spectrometry" mass="4129.6" method="MALDI" evidence="2"/>
<comment type="similarity">
    <text evidence="4">Belongs to the beta-defensin family.</text>
</comment>
<evidence type="ECO:0000250" key="1"/>
<evidence type="ECO:0000269" key="2">
    <source>
    </source>
</evidence>
<evidence type="ECO:0000269" key="3">
    <source>
    </source>
</evidence>
<evidence type="ECO:0000305" key="4"/>
<keyword id="KW-0044">Antibiotic</keyword>
<keyword id="KW-0929">Antimicrobial</keyword>
<keyword id="KW-0211">Defensin</keyword>
<keyword id="KW-0903">Direct protein sequencing</keyword>
<keyword id="KW-1015">Disulfide bond</keyword>
<keyword id="KW-1185">Reference proteome</keyword>
<keyword id="KW-0964">Secreted</keyword>
<keyword id="KW-0732">Signal</keyword>
<organism>
    <name type="scientific">Meleagris gallopavo</name>
    <name type="common">Wild turkey</name>
    <dbReference type="NCBI Taxonomy" id="9103"/>
    <lineage>
        <taxon>Eukaryota</taxon>
        <taxon>Metazoa</taxon>
        <taxon>Chordata</taxon>
        <taxon>Craniata</taxon>
        <taxon>Vertebrata</taxon>
        <taxon>Euteleostomi</taxon>
        <taxon>Archelosauria</taxon>
        <taxon>Archosauria</taxon>
        <taxon>Dinosauria</taxon>
        <taxon>Saurischia</taxon>
        <taxon>Theropoda</taxon>
        <taxon>Coelurosauria</taxon>
        <taxon>Aves</taxon>
        <taxon>Neognathae</taxon>
        <taxon>Galloanserae</taxon>
        <taxon>Galliformes</taxon>
        <taxon>Phasianidae</taxon>
        <taxon>Meleagridinae</taxon>
        <taxon>Meleagris</taxon>
    </lineage>
</organism>
<accession>P80392</accession>
<accession>O93506</accession>